<dbReference type="EMBL" id="AY584611">
    <property type="protein sequence ID" value="AAS91740.1"/>
    <property type="molecule type" value="mRNA"/>
</dbReference>
<dbReference type="EMBL" id="AC115992">
    <property type="status" value="NOT_ANNOTATED_CDS"/>
    <property type="molecule type" value="Genomic_DNA"/>
</dbReference>
<dbReference type="CCDS" id="CCDS42308.1"/>
<dbReference type="RefSeq" id="NP_001004334.3">
    <property type="nucleotide sequence ID" value="NM_001004334.3"/>
</dbReference>
<dbReference type="PDB" id="8D1B">
    <property type="method" value="EM"/>
    <property type="resolution" value="3.57 A"/>
    <property type="chains" value="A/B=1-740"/>
</dbReference>
<dbReference type="PDB" id="8IRJ">
    <property type="method" value="EM"/>
    <property type="resolution" value="3.49 A"/>
    <property type="chains" value="A/B=1-735"/>
</dbReference>
<dbReference type="PDBsum" id="8D1B"/>
<dbReference type="PDBsum" id="8IRJ"/>
<dbReference type="EMDB" id="EMD-27121"/>
<dbReference type="EMDB" id="EMD-35676"/>
<dbReference type="SMR" id="Q6PRD1"/>
<dbReference type="BioGRID" id="136572">
    <property type="interactions" value="4"/>
</dbReference>
<dbReference type="CORUM" id="Q6PRD1"/>
<dbReference type="FunCoup" id="Q6PRD1">
    <property type="interactions" value="9"/>
</dbReference>
<dbReference type="IntAct" id="Q6PRD1">
    <property type="interactions" value="10"/>
</dbReference>
<dbReference type="MINT" id="Q6PRD1"/>
<dbReference type="STRING" id="9606.ENSP00000483469"/>
<dbReference type="TCDB" id="9.A.14.15.6">
    <property type="family name" value="the g-protein-coupled receptor (gpcr) family"/>
</dbReference>
<dbReference type="GlyCosmos" id="Q6PRD1">
    <property type="glycosylation" value="2 sites, No reported glycans"/>
</dbReference>
<dbReference type="GlyGen" id="Q6PRD1">
    <property type="glycosylation" value="5 sites, 1 O-linked glycan (1 site)"/>
</dbReference>
<dbReference type="iPTMnet" id="Q6PRD1"/>
<dbReference type="PhosphoSitePlus" id="Q6PRD1"/>
<dbReference type="BioMuta" id="GPR179"/>
<dbReference type="DMDM" id="85540945"/>
<dbReference type="MassIVE" id="Q6PRD1"/>
<dbReference type="PaxDb" id="9606-ENSP00000483469"/>
<dbReference type="ProteomicsDB" id="67258"/>
<dbReference type="DNASU" id="440435"/>
<dbReference type="Ensembl" id="ENST00000610650.1">
    <property type="protein sequence ID" value="ENSP00000484951.1"/>
    <property type="gene ID" value="ENSG00000276469.1"/>
</dbReference>
<dbReference type="GeneID" id="440435"/>
<dbReference type="KEGG" id="hsa:440435"/>
<dbReference type="UCSC" id="uc032gkv.1">
    <property type="organism name" value="human"/>
</dbReference>
<dbReference type="AGR" id="HGNC:31371"/>
<dbReference type="CTD" id="440435"/>
<dbReference type="DisGeNET" id="440435"/>
<dbReference type="GeneCards" id="GPR179"/>
<dbReference type="HGNC" id="HGNC:31371">
    <property type="gene designation" value="GPR179"/>
</dbReference>
<dbReference type="MalaCards" id="GPR179"/>
<dbReference type="MIM" id="614515">
    <property type="type" value="gene"/>
</dbReference>
<dbReference type="MIM" id="614565">
    <property type="type" value="phenotype"/>
</dbReference>
<dbReference type="neXtProt" id="NX_Q6PRD1"/>
<dbReference type="Orphanet" id="215">
    <property type="disease" value="Congenital stationary night blindness"/>
</dbReference>
<dbReference type="PharmGKB" id="PA134900696"/>
<dbReference type="eggNOG" id="KOG4418">
    <property type="taxonomic scope" value="Eukaryota"/>
</dbReference>
<dbReference type="InParanoid" id="Q6PRD1"/>
<dbReference type="OrthoDB" id="5823771at2759"/>
<dbReference type="PAN-GO" id="Q6PRD1">
    <property type="GO annotations" value="0 GO annotations based on evolutionary models"/>
</dbReference>
<dbReference type="PhylomeDB" id="Q6PRD1"/>
<dbReference type="TreeFam" id="TF319114"/>
<dbReference type="PathwayCommons" id="Q6PRD1"/>
<dbReference type="SignaLink" id="Q6PRD1"/>
<dbReference type="BioGRID-ORCS" id="440435">
    <property type="hits" value="38 hits in 1132 CRISPR screens"/>
</dbReference>
<dbReference type="GeneWiki" id="GPR179"/>
<dbReference type="GenomeRNAi" id="440435"/>
<dbReference type="Pharos" id="Q6PRD1">
    <property type="development level" value="Tdark"/>
</dbReference>
<dbReference type="PRO" id="PR:Q6PRD1"/>
<dbReference type="Proteomes" id="UP000005640">
    <property type="component" value="Unplaced"/>
</dbReference>
<dbReference type="RNAct" id="Q6PRD1">
    <property type="molecule type" value="protein"/>
</dbReference>
<dbReference type="GO" id="GO:0030425">
    <property type="term" value="C:dendrite"/>
    <property type="evidence" value="ECO:0000314"/>
    <property type="project" value="UniProtKB"/>
</dbReference>
<dbReference type="GO" id="GO:0045211">
    <property type="term" value="C:postsynaptic membrane"/>
    <property type="evidence" value="ECO:0000250"/>
    <property type="project" value="UniProtKB"/>
</dbReference>
<dbReference type="GO" id="GO:0004930">
    <property type="term" value="F:G protein-coupled receptor activity"/>
    <property type="evidence" value="ECO:0007669"/>
    <property type="project" value="UniProtKB-KW"/>
</dbReference>
<dbReference type="GO" id="GO:0007601">
    <property type="term" value="P:visual perception"/>
    <property type="evidence" value="ECO:0000315"/>
    <property type="project" value="UniProtKB"/>
</dbReference>
<dbReference type="CDD" id="cd15293">
    <property type="entry name" value="7tmC_GPR158-like"/>
    <property type="match status" value="1"/>
</dbReference>
<dbReference type="CDD" id="cd00054">
    <property type="entry name" value="EGF_CA"/>
    <property type="match status" value="1"/>
</dbReference>
<dbReference type="InterPro" id="IPR017978">
    <property type="entry name" value="GPCR_3_C"/>
</dbReference>
<dbReference type="InterPro" id="IPR043458">
    <property type="entry name" value="GPR158/179"/>
</dbReference>
<dbReference type="InterPro" id="IPR054714">
    <property type="entry name" value="GPR158_179_extracellular"/>
</dbReference>
<dbReference type="PANTHER" id="PTHR32546">
    <property type="entry name" value="G-PROTEIN COUPLED RECEPTOR 158-RELATED"/>
    <property type="match status" value="1"/>
</dbReference>
<dbReference type="PANTHER" id="PTHR32546:SF7">
    <property type="entry name" value="G-PROTEIN COUPLED RECEPTOR 179-RELATED"/>
    <property type="match status" value="1"/>
</dbReference>
<dbReference type="Pfam" id="PF00003">
    <property type="entry name" value="7tm_3"/>
    <property type="match status" value="1"/>
</dbReference>
<dbReference type="Pfam" id="PF22572">
    <property type="entry name" value="GPR158_179_EC"/>
    <property type="match status" value="1"/>
</dbReference>
<dbReference type="PROSITE" id="PS50259">
    <property type="entry name" value="G_PROTEIN_RECEP_F3_4"/>
    <property type="match status" value="1"/>
</dbReference>
<proteinExistence type="evidence at protein level"/>
<accession>Q6PRD1</accession>
<keyword id="KW-0002">3D-structure</keyword>
<keyword id="KW-1003">Cell membrane</keyword>
<keyword id="KW-0966">Cell projection</keyword>
<keyword id="KW-1014">Congenital stationary night blindness</keyword>
<keyword id="KW-0225">Disease variant</keyword>
<keyword id="KW-1015">Disulfide bond</keyword>
<keyword id="KW-0297">G-protein coupled receptor</keyword>
<keyword id="KW-0325">Glycoprotein</keyword>
<keyword id="KW-0472">Membrane</keyword>
<keyword id="KW-0628">Postsynaptic cell membrane</keyword>
<keyword id="KW-1267">Proteomics identification</keyword>
<keyword id="KW-0675">Receptor</keyword>
<keyword id="KW-1185">Reference proteome</keyword>
<keyword id="KW-0716">Sensory transduction</keyword>
<keyword id="KW-0732">Signal</keyword>
<keyword id="KW-0770">Synapse</keyword>
<keyword id="KW-0807">Transducer</keyword>
<keyword id="KW-0812">Transmembrane</keyword>
<keyword id="KW-1133">Transmembrane helix</keyword>
<keyword id="KW-0844">Vision</keyword>
<organism>
    <name type="scientific">Homo sapiens</name>
    <name type="common">Human</name>
    <dbReference type="NCBI Taxonomy" id="9606"/>
    <lineage>
        <taxon>Eukaryota</taxon>
        <taxon>Metazoa</taxon>
        <taxon>Chordata</taxon>
        <taxon>Craniata</taxon>
        <taxon>Vertebrata</taxon>
        <taxon>Euteleostomi</taxon>
        <taxon>Mammalia</taxon>
        <taxon>Eutheria</taxon>
        <taxon>Euarchontoglires</taxon>
        <taxon>Primates</taxon>
        <taxon>Haplorrhini</taxon>
        <taxon>Catarrhini</taxon>
        <taxon>Hominidae</taxon>
        <taxon>Homo</taxon>
    </lineage>
</organism>
<sequence>MGTRGAVMPPPMWGLLGCCFVCAWALGGPRPIRSLPPLSSQVKPGSVPMQVPLEGAEAALAYLYSGDAQQLSQVNCSERYEARGAGAMPGLPPSLQGAAGTLAQAANFLNMLLQANDIRESSVEEDVEWYQALVRSVAEGDPRVYRALLTFNPPPGASHLQLALQATRTGEETILQDLSGNWVQEENPPGDLDTPALKKRVLTNDLGSLGSPKWPQADGYVGDTQQVRLSPPFLECQEGRLRPGWLITLSATFYGLKPDLSPEVRGQVQMDVDLQSVDINQCASGPGWYSNTHLCDLNSTQCVPLESQGFVLGRYLCRCRPGFYGASPSGGLEESDFQTTGQFGFPEGRSGRLLQCLPCPEGCTSCMDATPCLVEEAAVLRAAVLACQACCMLAIFLSMLVSYRCRRNKRIWASGVVLLETVLFGFLLLYFPVFILYFKPSVFRCIALRWVRLLGFAIVYGTIILKLYRVLQLFLSRTAQRSALLSSGRLLRRLGLLLLPVLGFLAVWTVGALERGIQHAPLVIRGHTPSGRHFYLCHHDRWDYIMVVAELLLLCWGSFLCYATRAVLSAFHEPRYMGIALHNELLLSAAFHTARFVLVPSLHPDWTLLLFFFHTHSTVTTTLALIFIPKFWKLGAPPREEMVDEVCEDELDLQHSGSYLGSSIASAWSEHSLDPGDIRDELKKLYAQLEVHKTKEMAANNPHLPKKRGSSCQGLGRSFMRYLAEFPEALARQHSRDSGSPGHGSLPGSSRRRLLSSSLQEPEGTPALHKSRSTYDQRREQDPPLLDSLLRRKLAKKASRTESRESVEGPPALGFRSASAHNLTVGERLPRARPASLQKSLSVASSREKALLMASQAYLEETYRQAKEREERKKAKAAMASLVRRPSARRLERPRGAPLSAPPSPAKSSSVDSSHTSGRLHEEARRRLPHPPIRHQVSTPILALSGGLGEPRMLSPTSTLAPALLPALAPTPAPALAPVPVSPQSPNLLTYICPWENAELPAKQENVPQEGPSGPERGHHSPAPARARLWRALSVAVEKSRAGENEMDAEDAHHQREANDVDEDRPKIFPKSHSLKAPVQQGSMRSLGLAIKALTRSRSTYREKESVEESPEGQNSGTAGESMGAPSRSPRLGRPKAVSKQAALIPSDDKESLQNQQNAHTSRMLQVCQREGSREQEDRGRRMTQGLGERKAERAGKTGLAMLRQVSRDKNIKQSKETPVGWQELPKAGLQSLGSADHRVAEVCPWEVTESETRQPDSGNKAEICPWETSEGAPESRALRQDPGDSQKKRGEARGKSEPIDVVPMMRKKPERLVREQEAVCPWESADRGGLSPGSAPQDPGRIRDKSEAGDSVEARKVEKPGWEAAGPEAHTPDITKAEPCPWEASEGGEDGKPAQEAVKDLPQEKQKTRKATFWKEQKPGGDLESLCPWESTDFRGPSAVSIQAPGSSECSGSLGSGIAEVCLWEAGDAPAIQKAEICPWELDDNVMGQEMLSLGTGRESLQEKEKASRKGSFGEMGEQTVKAVQKLSQQQESVCPRESTVPGHSSPCLDNSSSKAGSQFLCNGGSRATQVCPQEDLRPEAQEATPAKTEICPWEVNERTREEWTSAQVPRGGESQKDKEKMPGKSEIEDVTAWEKPEGQIQKQEAVGPWESVDPGSFSPQPRPQDTERPQTLLQMSGSVGSKAADICPLDVEENLTAGKAEICPWEVGAGAGEERALGAEAIRKSPNDTGKVSADLGPRERAVTAPEKPQKPTPEWEVACPWGSVGPGACSQHPGTLDADGPKAGFQELDHMGCRPGEVCPWEAQEAATSEKAKICPWEVSEGTTGKGLDQKAGSESAEQREKALEKGRLTSLGEDVSKGMAKLCQQQETICIWENKDLRESPAQAPKISDLPSSMSSEVAEGHSLEATEKGDLRQDPKTGSFPEHITQEKAPAADTEEFTTEDGEKTSHELQSVCPWETTAPADSVSHLDRQRPDQPKASSQRLVSTGGRAADVCPWDVPDAGVYKSDSSAKAETCPWEVTERIPVKGVSRQDGKGDSQEEKGRAPEKSEPKGVPVQKKPEMADFRQQEAVCPWESQDGKGLSPQPAPDASDRSRGSSEAAGSVETRVAEVCLWEVVEAPSAKKAEICPWEAGGGAAEEGEQERESQGQGEMFLQKAGPGGTEEHFSKAAAKPREQEAVCPGEGTGSGGLLPQSGALDPELKVSPKEAGSMGSRMAELCQWEITDPEGNKIKGTMADICPGEETGVPSEESGLLALTATRREFFPTAPEKPLCLLVHGPLDHFFPESKIPCPKVSRPASTFTLEGVRELQGPSGLEPRTSLAPEPSLQEAESQSSSLTEDSGQVAFEAQYEEFTPPTVYPWDWE</sequence>
<evidence type="ECO:0000250" key="1">
    <source>
        <dbReference type="UniProtKB" id="E9PY61"/>
    </source>
</evidence>
<evidence type="ECO:0000250" key="2">
    <source>
        <dbReference type="UniProtKB" id="Q5T848"/>
    </source>
</evidence>
<evidence type="ECO:0000255" key="3"/>
<evidence type="ECO:0000256" key="4">
    <source>
        <dbReference type="SAM" id="MobiDB-lite"/>
    </source>
</evidence>
<evidence type="ECO:0000269" key="5">
    <source>
    </source>
</evidence>
<evidence type="ECO:0000269" key="6">
    <source>
    </source>
</evidence>
<evidence type="ECO:0000269" key="7">
    <source>
    </source>
</evidence>
<evidence type="ECO:0000303" key="8">
    <source>
    </source>
</evidence>
<evidence type="ECO:0000303" key="9">
    <source ref="1"/>
</evidence>
<evidence type="ECO:0000305" key="10"/>
<evidence type="ECO:0000312" key="11">
    <source>
        <dbReference type="HGNC" id="HGNC:31371"/>
    </source>
</evidence>
<evidence type="ECO:0007829" key="12">
    <source>
        <dbReference type="PDB" id="8IRJ"/>
    </source>
</evidence>
<reference key="1">
    <citation type="submission" date="2004-03" db="EMBL/GenBank/DDBJ databases">
        <title>Complete coding sequence of GPR158L1.</title>
        <authorList>
            <person name="Bonner T.I."/>
            <person name="Nagle J.W."/>
            <person name="Kauffman D."/>
            <person name="Kozhich O."/>
        </authorList>
    </citation>
    <scope>NUCLEOTIDE SEQUENCE [MRNA]</scope>
    <source>
        <tissue>Pituitary</tissue>
    </source>
</reference>
<reference key="2">
    <citation type="journal article" date="2006" name="Nature">
        <title>DNA sequence of human chromosome 17 and analysis of rearrangement in the human lineage.</title>
        <authorList>
            <person name="Zody M.C."/>
            <person name="Garber M."/>
            <person name="Adams D.J."/>
            <person name="Sharpe T."/>
            <person name="Harrow J."/>
            <person name="Lupski J.R."/>
            <person name="Nicholson C."/>
            <person name="Searle S.M."/>
            <person name="Wilming L."/>
            <person name="Young S.K."/>
            <person name="Abouelleil A."/>
            <person name="Allen N.R."/>
            <person name="Bi W."/>
            <person name="Bloom T."/>
            <person name="Borowsky M.L."/>
            <person name="Bugalter B.E."/>
            <person name="Butler J."/>
            <person name="Chang J.L."/>
            <person name="Chen C.-K."/>
            <person name="Cook A."/>
            <person name="Corum B."/>
            <person name="Cuomo C.A."/>
            <person name="de Jong P.J."/>
            <person name="DeCaprio D."/>
            <person name="Dewar K."/>
            <person name="FitzGerald M."/>
            <person name="Gilbert J."/>
            <person name="Gibson R."/>
            <person name="Gnerre S."/>
            <person name="Goldstein S."/>
            <person name="Grafham D.V."/>
            <person name="Grocock R."/>
            <person name="Hafez N."/>
            <person name="Hagopian D.S."/>
            <person name="Hart E."/>
            <person name="Norman C.H."/>
            <person name="Humphray S."/>
            <person name="Jaffe D.B."/>
            <person name="Jones M."/>
            <person name="Kamal M."/>
            <person name="Khodiyar V.K."/>
            <person name="LaButti K."/>
            <person name="Laird G."/>
            <person name="Lehoczky J."/>
            <person name="Liu X."/>
            <person name="Lokyitsang T."/>
            <person name="Loveland J."/>
            <person name="Lui A."/>
            <person name="Macdonald P."/>
            <person name="Major J.E."/>
            <person name="Matthews L."/>
            <person name="Mauceli E."/>
            <person name="McCarroll S.A."/>
            <person name="Mihalev A.H."/>
            <person name="Mudge J."/>
            <person name="Nguyen C."/>
            <person name="Nicol R."/>
            <person name="O'Leary S.B."/>
            <person name="Osoegawa K."/>
            <person name="Schwartz D.C."/>
            <person name="Shaw-Smith C."/>
            <person name="Stankiewicz P."/>
            <person name="Steward C."/>
            <person name="Swarbreck D."/>
            <person name="Venkataraman V."/>
            <person name="Whittaker C.A."/>
            <person name="Yang X."/>
            <person name="Zimmer A.R."/>
            <person name="Bradley A."/>
            <person name="Hubbard T."/>
            <person name="Birren B.W."/>
            <person name="Rogers J."/>
            <person name="Lander E.S."/>
            <person name="Nusbaum C."/>
        </authorList>
    </citation>
    <scope>NUCLEOTIDE SEQUENCE [LARGE SCALE GENOMIC DNA]</scope>
</reference>
<reference key="3">
    <citation type="journal article" date="2012" name="Am. J. Hum. Genet.">
        <title>Whole-exome sequencing identifies mutations in GPR179 leading to autosomal-recessive complete congenital stationary night blindness.</title>
        <authorList>
            <person name="Audo I."/>
            <person name="Bujakowska K."/>
            <person name="Orhan E."/>
            <person name="Poloschek C.M."/>
            <person name="Defoort-Dhellemmes S."/>
            <person name="Drumare I."/>
            <person name="Kohl S."/>
            <person name="Luu T.D."/>
            <person name="Lecompte O."/>
            <person name="Zrenner E."/>
            <person name="Lancelot M.E."/>
            <person name="Antonio A."/>
            <person name="Germain A."/>
            <person name="Michiels C."/>
            <person name="Audier C."/>
            <person name="Letexier M."/>
            <person name="Saraiva J.P."/>
            <person name="Leroy B.P."/>
            <person name="Munier F.L."/>
            <person name="Mohand-Said S."/>
            <person name="Lorenz B."/>
            <person name="Friedburg C."/>
            <person name="Preising M."/>
            <person name="Kellner U."/>
            <person name="Renner A.B."/>
            <person name="Moskova-Doumanova V."/>
            <person name="Berger W."/>
            <person name="Wissinger B."/>
            <person name="Hamel C.P."/>
            <person name="Schorderet D.F."/>
            <person name="De Baere E."/>
            <person name="Sharon D."/>
            <person name="Banin E."/>
            <person name="Jacobson S.G."/>
            <person name="Bonneau D."/>
            <person name="Zanlonghi X."/>
            <person name="Le Meur G."/>
            <person name="Casteels I."/>
            <person name="Koenekoop R."/>
            <person name="Long V.W."/>
            <person name="Meire F."/>
            <person name="Prescott K."/>
            <person name="de Ravel T."/>
            <person name="Simmons I."/>
            <person name="Nguyen H."/>
            <person name="Dollfus H."/>
            <person name="Poch O."/>
            <person name="Leveillard T."/>
            <person name="Nguyen-Ba-Charvet K."/>
            <person name="Sahel J.A."/>
            <person name="Bhattacharya S.S."/>
            <person name="Zeitz C."/>
        </authorList>
    </citation>
    <scope>TISSUE SPECIFICITY</scope>
    <scope>VARIANTS CSNB1E HIS-126; ASP-455 AND TYR-603</scope>
</reference>
<reference key="4">
    <citation type="journal article" date="2013" name="Invest. Ophthalmol. Vis. Sci.">
        <title>Ultrastructural localization of GPR179 and the impact of mutant forms on retinal function in CSNB1 patients and a mouse model.</title>
        <authorList>
            <person name="Klooster J."/>
            <person name="van Genderen M.M."/>
            <person name="Yu M."/>
            <person name="Florijn R.J."/>
            <person name="Riemslag F.C."/>
            <person name="Bergen A.A."/>
            <person name="Gregg R.G."/>
            <person name="Peachey N.S."/>
            <person name="Kamermans M."/>
        </authorList>
    </citation>
    <scope>FUNCTION</scope>
    <scope>SUBCELLULAR LOCATION</scope>
</reference>
<reference key="5">
    <citation type="journal article" date="2012" name="Am. J. Hum. Genet.">
        <title>GPR179 is required for depolarizing bipolar cell function and is mutated in autosomal-recessive complete congenital stationary night blindness.</title>
        <authorList>
            <person name="Peachey N.S."/>
            <person name="Ray T.A."/>
            <person name="Florijn R."/>
            <person name="Rowe L.B."/>
            <person name="Sjoerdsma T."/>
            <person name="Contreras-Alcantara S."/>
            <person name="Baba K."/>
            <person name="Tosini G."/>
            <person name="Pozdeyev N."/>
            <person name="Iuvone P.M."/>
            <person name="Bojang P. Jr."/>
            <person name="Pearring J.N."/>
            <person name="Simonsz H.J."/>
            <person name="van Genderen M."/>
            <person name="Birch D.G."/>
            <person name="Traboulsi E.I."/>
            <person name="Dorfman A."/>
            <person name="Lopez I."/>
            <person name="Ren H."/>
            <person name="Goldberg A.F."/>
            <person name="Nishina P.M."/>
            <person name="Lachapelle P."/>
            <person name="McCall M.A."/>
            <person name="Koenekoop R.K."/>
            <person name="Bergen A.A."/>
            <person name="Kamermans M."/>
            <person name="Gregg R.G."/>
        </authorList>
    </citation>
    <scope>FUNCTION</scope>
    <scope>VARIANT CSNB1E CYS-220</scope>
</reference>
<protein>
    <recommendedName>
        <fullName>Probable G-protein coupled receptor 179</fullName>
    </recommendedName>
    <alternativeName>
        <fullName>Probable G-protein coupled receptor 158-like 1</fullName>
        <shortName>GPR158-like</shortName>
    </alternativeName>
</protein>
<feature type="signal peptide" evidence="3">
    <location>
        <begin position="1"/>
        <end position="25"/>
    </location>
</feature>
<feature type="chain" id="PRO_0000045397" description="Probable G-protein coupled receptor 179">
    <location>
        <begin position="26"/>
        <end position="2367"/>
    </location>
</feature>
<feature type="topological domain" description="Extracellular" evidence="3">
    <location>
        <begin position="26"/>
        <end position="381"/>
    </location>
</feature>
<feature type="transmembrane region" description="Helical; Name=1" evidence="3">
    <location>
        <begin position="382"/>
        <end position="402"/>
    </location>
</feature>
<feature type="topological domain" description="Cytoplasmic" evidence="3">
    <location>
        <begin position="403"/>
        <end position="415"/>
    </location>
</feature>
<feature type="transmembrane region" description="Helical; Name=2" evidence="3">
    <location>
        <begin position="416"/>
        <end position="436"/>
    </location>
</feature>
<feature type="topological domain" description="Extracellular" evidence="3">
    <location>
        <begin position="437"/>
        <end position="444"/>
    </location>
</feature>
<feature type="transmembrane region" description="Helical; Name=3" evidence="3">
    <location>
        <begin position="445"/>
        <end position="465"/>
    </location>
</feature>
<feature type="topological domain" description="Cytoplasmic" evidence="3">
    <location>
        <begin position="466"/>
        <end position="493"/>
    </location>
</feature>
<feature type="transmembrane region" description="Helical; Name=4" evidence="3">
    <location>
        <begin position="494"/>
        <end position="514"/>
    </location>
</feature>
<feature type="topological domain" description="Extracellular" evidence="3">
    <location>
        <begin position="515"/>
        <end position="543"/>
    </location>
</feature>
<feature type="transmembrane region" description="Helical; Name=5" evidence="3">
    <location>
        <begin position="544"/>
        <end position="564"/>
    </location>
</feature>
<feature type="topological domain" description="Cytoplasmic" evidence="3">
    <location>
        <begin position="565"/>
        <end position="575"/>
    </location>
</feature>
<feature type="transmembrane region" description="Helical; Name=6" evidence="3">
    <location>
        <begin position="576"/>
        <end position="594"/>
    </location>
</feature>
<feature type="topological domain" description="Extracellular" evidence="3">
    <location>
        <begin position="595"/>
        <end position="607"/>
    </location>
</feature>
<feature type="transmembrane region" description="Helical; Name=7" evidence="3">
    <location>
        <begin position="608"/>
        <end position="628"/>
    </location>
</feature>
<feature type="topological domain" description="Cytoplasmic" evidence="3">
    <location>
        <begin position="629"/>
        <end position="2367"/>
    </location>
</feature>
<feature type="region of interest" description="Cache-like region" evidence="2">
    <location>
        <begin position="62"/>
        <end position="245"/>
    </location>
</feature>
<feature type="region of interest" description="Disordered" evidence="4">
    <location>
        <begin position="731"/>
        <end position="818"/>
    </location>
</feature>
<feature type="region of interest" description="Disordered" evidence="4">
    <location>
        <begin position="869"/>
        <end position="932"/>
    </location>
</feature>
<feature type="region of interest" description="Disordered" evidence="4">
    <location>
        <begin position="1039"/>
        <end position="1083"/>
    </location>
</feature>
<feature type="region of interest" description="Disordered" evidence="4">
    <location>
        <begin position="1098"/>
        <end position="1198"/>
    </location>
</feature>
<feature type="region of interest" description="Disordered" evidence="4">
    <location>
        <begin position="1247"/>
        <end position="1431"/>
    </location>
</feature>
<feature type="region of interest" description="Disordered" evidence="4">
    <location>
        <begin position="1537"/>
        <end position="1557"/>
    </location>
</feature>
<feature type="region of interest" description="Disordered" evidence="4">
    <location>
        <begin position="1577"/>
        <end position="1672"/>
    </location>
</feature>
<feature type="region of interest" description="Disordered" evidence="4">
    <location>
        <begin position="1723"/>
        <end position="1757"/>
    </location>
</feature>
<feature type="region of interest" description="Disordered" evidence="4">
    <location>
        <begin position="1823"/>
        <end position="1852"/>
    </location>
</feature>
<feature type="region of interest" description="Disordered" evidence="4">
    <location>
        <begin position="1886"/>
        <end position="2108"/>
    </location>
</feature>
<feature type="region of interest" description="Disordered" evidence="4">
    <location>
        <begin position="2133"/>
        <end position="2212"/>
    </location>
</feature>
<feature type="region of interest" description="Disordered" evidence="4">
    <location>
        <begin position="2308"/>
        <end position="2367"/>
    </location>
</feature>
<feature type="compositionally biased region" description="Low complexity" evidence="4">
    <location>
        <begin position="738"/>
        <end position="759"/>
    </location>
</feature>
<feature type="compositionally biased region" description="Basic and acidic residues" evidence="4">
    <location>
        <begin position="773"/>
        <end position="782"/>
    </location>
</feature>
<feature type="compositionally biased region" description="Basic and acidic residues" evidence="4">
    <location>
        <begin position="1039"/>
        <end position="1067"/>
    </location>
</feature>
<feature type="compositionally biased region" description="Polar residues" evidence="4">
    <location>
        <begin position="1153"/>
        <end position="1164"/>
    </location>
</feature>
<feature type="compositionally biased region" description="Basic and acidic residues" evidence="4">
    <location>
        <begin position="1171"/>
        <end position="1181"/>
    </location>
</feature>
<feature type="compositionally biased region" description="Basic and acidic residues" evidence="4">
    <location>
        <begin position="1277"/>
        <end position="1299"/>
    </location>
</feature>
<feature type="compositionally biased region" description="Basic and acidic residues" evidence="4">
    <location>
        <begin position="1341"/>
        <end position="1362"/>
    </location>
</feature>
<feature type="compositionally biased region" description="Basic and acidic residues" evidence="4">
    <location>
        <begin position="1390"/>
        <end position="1407"/>
    </location>
</feature>
<feature type="compositionally biased region" description="Basic and acidic residues" evidence="4">
    <location>
        <begin position="1615"/>
        <end position="1639"/>
    </location>
</feature>
<feature type="compositionally biased region" description="Basic and acidic residues" evidence="4">
    <location>
        <begin position="1840"/>
        <end position="1851"/>
    </location>
</feature>
<feature type="compositionally biased region" description="Basic and acidic residues" evidence="4">
    <location>
        <begin position="1903"/>
        <end position="1920"/>
    </location>
</feature>
<feature type="compositionally biased region" description="Basic and acidic residues" evidence="4">
    <location>
        <begin position="1970"/>
        <end position="1979"/>
    </location>
</feature>
<feature type="compositionally biased region" description="Basic and acidic residues" evidence="4">
    <location>
        <begin position="2023"/>
        <end position="2054"/>
    </location>
</feature>
<feature type="compositionally biased region" description="Basic and acidic residues" evidence="4">
    <location>
        <begin position="2061"/>
        <end position="2070"/>
    </location>
</feature>
<feature type="compositionally biased region" description="Basic and acidic residues" evidence="4">
    <location>
        <begin position="2165"/>
        <end position="2180"/>
    </location>
</feature>
<feature type="compositionally biased region" description="Low complexity" evidence="4">
    <location>
        <begin position="2326"/>
        <end position="2340"/>
    </location>
</feature>
<feature type="glycosylation site" description="N-linked (GlcNAc...) asparagine" evidence="3">
    <location>
        <position position="75"/>
    </location>
</feature>
<feature type="glycosylation site" description="N-linked (GlcNAc...) asparagine" evidence="3">
    <location>
        <position position="298"/>
    </location>
</feature>
<feature type="disulfide bond" evidence="2">
    <location>
        <begin position="76"/>
        <end position="236"/>
    </location>
</feature>
<feature type="disulfide bond" evidence="2">
    <location>
        <begin position="445"/>
        <end position="537"/>
    </location>
</feature>
<feature type="sequence variant" id="VAR_067925" description="In CSNB1E; dbSNP:rs281875233." evidence="5">
    <original>D</original>
    <variation>H</variation>
    <location>
        <position position="126"/>
    </location>
</feature>
<feature type="sequence variant" id="VAR_067926" description="In CSNB1E; dbSNP:rs281875236." evidence="6">
    <original>Y</original>
    <variation>C</variation>
    <location>
        <position position="220"/>
    </location>
</feature>
<feature type="sequence variant" id="VAR_067927" description="In CSNB1E; dbSNP:rs281875235." evidence="5">
    <original>G</original>
    <variation>D</variation>
    <location>
        <position position="455"/>
    </location>
</feature>
<feature type="sequence variant" id="VAR_067928" description="In CSNB1E; dbSNP:rs281875234." evidence="5">
    <original>H</original>
    <variation>Y</variation>
    <location>
        <position position="603"/>
    </location>
</feature>
<feature type="sequence variant" id="VAR_061204" description="In dbSNP:rs55727040.">
    <original>K</original>
    <variation>E</variation>
    <location>
        <position position="1150"/>
    </location>
</feature>
<feature type="sequence variant" id="VAR_049287" description="In dbSNP:rs4399578.">
    <original>Q</original>
    <variation>E</variation>
    <location>
        <position position="1176"/>
    </location>
</feature>
<feature type="sequence variant" id="VAR_049288" description="In dbSNP:rs4398144.">
    <original>C</original>
    <variation>R</variation>
    <location>
        <position position="1381"/>
    </location>
</feature>
<feature type="sequence variant" id="VAR_049289" description="In dbSNP:rs4399578.">
    <original>Q</original>
    <variation>E</variation>
    <location>
        <position position="1869"/>
    </location>
</feature>
<feature type="helix" evidence="12">
    <location>
        <begin position="58"/>
        <end position="62"/>
    </location>
</feature>
<feature type="helix" evidence="12">
    <location>
        <begin position="69"/>
        <end position="71"/>
    </location>
</feature>
<feature type="helix" evidence="12">
    <location>
        <begin position="93"/>
        <end position="115"/>
    </location>
</feature>
<feature type="turn" evidence="12">
    <location>
        <begin position="123"/>
        <end position="126"/>
    </location>
</feature>
<feature type="helix" evidence="12">
    <location>
        <begin position="127"/>
        <end position="138"/>
    </location>
</feature>
<feature type="strand" evidence="12">
    <location>
        <begin position="144"/>
        <end position="151"/>
    </location>
</feature>
<feature type="strand" evidence="12">
    <location>
        <begin position="161"/>
        <end position="167"/>
    </location>
</feature>
<feature type="strand" evidence="12">
    <location>
        <begin position="170"/>
        <end position="176"/>
    </location>
</feature>
<feature type="strand" evidence="12">
    <location>
        <begin position="198"/>
        <end position="205"/>
    </location>
</feature>
<feature type="strand" evidence="12">
    <location>
        <begin position="216"/>
        <end position="221"/>
    </location>
</feature>
<feature type="helix" evidence="12">
    <location>
        <begin position="224"/>
        <end position="226"/>
    </location>
</feature>
<feature type="strand" evidence="12">
    <location>
        <begin position="246"/>
        <end position="254"/>
    </location>
</feature>
<feature type="strand" evidence="12">
    <location>
        <begin position="264"/>
        <end position="273"/>
    </location>
</feature>
<feature type="strand" evidence="12">
    <location>
        <begin position="285"/>
        <end position="289"/>
    </location>
</feature>
<feature type="turn" evidence="12">
    <location>
        <begin position="297"/>
        <end position="299"/>
    </location>
</feature>
<feature type="strand" evidence="12">
    <location>
        <begin position="300"/>
        <end position="304"/>
    </location>
</feature>
<feature type="strand" evidence="12">
    <location>
        <begin position="315"/>
        <end position="319"/>
    </location>
</feature>
<feature type="helix" evidence="12">
    <location>
        <begin position="329"/>
        <end position="331"/>
    </location>
</feature>
<feature type="strand" evidence="12">
    <location>
        <begin position="360"/>
        <end position="370"/>
    </location>
</feature>
<feature type="helix" evidence="12">
    <location>
        <begin position="379"/>
        <end position="401"/>
    </location>
</feature>
<feature type="helix" evidence="12">
    <location>
        <begin position="404"/>
        <end position="407"/>
    </location>
</feature>
<feature type="helix" evidence="12">
    <location>
        <begin position="416"/>
        <end position="430"/>
    </location>
</feature>
<feature type="helix" evidence="12">
    <location>
        <begin position="432"/>
        <end position="435"/>
    </location>
</feature>
<feature type="helix" evidence="12">
    <location>
        <begin position="442"/>
        <end position="474"/>
    </location>
</feature>
<feature type="helix" evidence="12">
    <location>
        <begin position="489"/>
        <end position="518"/>
    </location>
</feature>
<feature type="strand" evidence="12">
    <location>
        <begin position="529"/>
        <end position="531"/>
    </location>
</feature>
<feature type="helix" evidence="12">
    <location>
        <begin position="541"/>
        <end position="564"/>
    </location>
</feature>
<feature type="helix" evidence="12">
    <location>
        <begin position="573"/>
        <end position="598"/>
    </location>
</feature>
<feature type="helix" evidence="12">
    <location>
        <begin position="599"/>
        <end position="601"/>
    </location>
</feature>
<feature type="helix" evidence="12">
    <location>
        <begin position="604"/>
        <end position="631"/>
    </location>
</feature>
<gene>
    <name evidence="8 11" type="primary">GPR179</name>
    <name type="synonym">GPR158L</name>
    <name evidence="9" type="synonym">GPR158L1</name>
</gene>
<comment type="function">
    <text evidence="1 6 7">Orphan receptor involved in vision (PubMed:22325362, PubMed:24084093). Required for signal transduction through retinal depolarizing bipolar cells (PubMed:22325362). Acts as an atypical G-protein coupled receptor that recruits and regulates the R7 group RGS-GNB5 complexes instead of activating G proteins: promotes the GTPase activator activity of R7 RGS proteins, increasing the GTPase activity of G protein alpha subunits, thereby driving them into their inactive GDP-bound form (By similarity). Associates with components of metabotropic signaling cascade in retina ON-bipolar neurons, such as TRPM1 and GRM6: may control the ability of the GRM6 cascade to gate TRPM1 (By similarity).</text>
</comment>
<comment type="subunit">
    <text evidence="1">Homodimer (By similarity). Associates with the R7 group RGS-GNB5 complexes, composed of an R7 group RGS subunit (RGS6, RGS7, RGS9 or RGS11) and GNB5, promoting their localization to the cell membrane and regulating the GTPase activator activity of R7 RGS proteins (By similarity). Interacts with TRPM1 (By similarity). Interacts with GRM6 (By similarity). Interacts with EGFLAM; transsynaptic interaction is required for synaptic organization of photoreceptor cells (By similarity).</text>
</comment>
<comment type="interaction">
    <interactant intactId="EBI-20895185">
        <id>Q6PRD1</id>
    </interactant>
    <interactant intactId="EBI-21327031">
        <id>Q63HQ2</id>
        <label>EGFLAM</label>
    </interactant>
    <organismsDiffer>false</organismsDiffer>
    <experiments>3</experiments>
</comment>
<comment type="interaction">
    <interactant intactId="EBI-20895185">
        <id>Q6PRD1</id>
    </interactant>
    <interactant intactId="EBI-8307554">
        <id>P35052</id>
        <label>GPC1</label>
    </interactant>
    <organismsDiffer>false</organismsDiffer>
    <experiments>2</experiments>
</comment>
<comment type="interaction">
    <interactant intactId="EBI-20895185">
        <id>Q6PRD1</id>
    </interactant>
    <interactant intactId="EBI-2558325">
        <id>P78333</id>
        <label>GPC5</label>
    </interactant>
    <organismsDiffer>false</organismsDiffer>
    <experiments>2</experiments>
</comment>
<comment type="interaction">
    <interactant intactId="EBI-20895185">
        <id>Q6PRD1</id>
    </interactant>
    <interactant intactId="EBI-3913237">
        <id>P31431</id>
        <label>SDC4</label>
    </interactant>
    <organismsDiffer>false</organismsDiffer>
    <experiments>2</experiments>
</comment>
<comment type="interaction">
    <interactant intactId="EBI-20895185">
        <id>Q6PRD1</id>
    </interactant>
    <interactant intactId="EBI-2025048">
        <id>Q4VBE4</id>
        <label>Egflam</label>
    </interactant>
    <organismsDiffer>true</organismsDiffer>
    <experiments>4</experiments>
</comment>
<comment type="subcellular location">
    <subcellularLocation>
        <location evidence="1">Cell membrane</location>
        <topology evidence="3">Multi-pass membrane protein</topology>
    </subcellularLocation>
    <subcellularLocation>
        <location evidence="1">Postsynaptic cell membrane</location>
        <topology evidence="3">Multi-pass membrane protein</topology>
    </subcellularLocation>
    <subcellularLocation>
        <location evidence="7">Cell projection</location>
        <location evidence="7">Dendrite</location>
    </subcellularLocation>
    <text evidence="7">Specifically localizes to the tips of retinal ON-bipolar dendrites.</text>
</comment>
<comment type="tissue specificity">
    <text evidence="5">Expressed in the retina.</text>
</comment>
<comment type="disease" evidence="5 6">
    <disease id="DI-03426">
        <name>Night blindness, congenital stationary, 1E</name>
        <acronym>CSNB1E</acronym>
        <description>An autosomal recessive, non-progressive retinal disorder characterized by impaired night vision, absence of the electroretinogram (ERG) b-wave, and variable degrees of involvement of other visual functions. Affected individuals have an ERG waveform that lacks the b-wave because of failure to transmit the photoreceptor signal through the retinal depolarizing bipolar cells.</description>
        <dbReference type="MIM" id="614565"/>
    </disease>
    <text>The disease is caused by variants affecting the gene represented in this entry.</text>
</comment>
<comment type="similarity">
    <text evidence="10">Belongs to the G-protein coupled receptor 3 family.</text>
</comment>
<comment type="online information" name="G protein-coupled receptor 179 (GPR179)">
    <link uri="https://databases.lovd.nl/shared/genes/GPR179"/>
    <text>Leiden Open Variation Database (LOVD)</text>
</comment>
<name>GP179_HUMAN</name>